<gene>
    <name evidence="1" type="primary">rsmJ</name>
    <name type="ordered locus">NT01EI_3736</name>
</gene>
<sequence>MAAVQLLAEEGADAAALSALAQRWGLCHDADAVLALVLTPQRLELRKLDEPKLGAIFVDFVGGTLAHRRRFGGGRGEAVAKAVGIKGGYLPDVVDATAGLGRDAFVLASLGCRVRMLERHPAVAALLDDGLQRGYADAEIGPWLRERLTLLHASSIEALATLTPRPEVVYLDPMFPHRQKSALVKKDMRVFQALVGADDDADALLAPARRLATKRVVVKRPDYAPPLAGVATPNATLTKSHRFDIYAPLA</sequence>
<feature type="chain" id="PRO_0000383378" description="Ribosomal RNA small subunit methyltransferase J">
    <location>
        <begin position="1"/>
        <end position="250"/>
    </location>
</feature>
<feature type="binding site" evidence="1">
    <location>
        <begin position="102"/>
        <end position="103"/>
    </location>
    <ligand>
        <name>S-adenosyl-L-methionine</name>
        <dbReference type="ChEBI" id="CHEBI:59789"/>
    </ligand>
</feature>
<feature type="binding site" evidence="1">
    <location>
        <begin position="118"/>
        <end position="119"/>
    </location>
    <ligand>
        <name>S-adenosyl-L-methionine</name>
        <dbReference type="ChEBI" id="CHEBI:59789"/>
    </ligand>
</feature>
<feature type="binding site" evidence="1">
    <location>
        <begin position="154"/>
        <end position="155"/>
    </location>
    <ligand>
        <name>S-adenosyl-L-methionine</name>
        <dbReference type="ChEBI" id="CHEBI:59789"/>
    </ligand>
</feature>
<feature type="binding site" evidence="1">
    <location>
        <position position="172"/>
    </location>
    <ligand>
        <name>S-adenosyl-L-methionine</name>
        <dbReference type="ChEBI" id="CHEBI:59789"/>
    </ligand>
</feature>
<proteinExistence type="inferred from homology"/>
<protein>
    <recommendedName>
        <fullName evidence="1">Ribosomal RNA small subunit methyltransferase J</fullName>
        <ecNumber evidence="1">2.1.1.242</ecNumber>
    </recommendedName>
    <alternativeName>
        <fullName evidence="1">16S rRNA m2G1516 methyltransferase</fullName>
    </alternativeName>
    <alternativeName>
        <fullName evidence="1">rRNA (guanine-N(2)-)-methyltransferase</fullName>
    </alternativeName>
</protein>
<evidence type="ECO:0000255" key="1">
    <source>
        <dbReference type="HAMAP-Rule" id="MF_01523"/>
    </source>
</evidence>
<accession>C5BB22</accession>
<dbReference type="EC" id="2.1.1.242" evidence="1"/>
<dbReference type="EMBL" id="CP001600">
    <property type="protein sequence ID" value="ACR70863.1"/>
    <property type="molecule type" value="Genomic_DNA"/>
</dbReference>
<dbReference type="RefSeq" id="WP_015872902.1">
    <property type="nucleotide sequence ID" value="NZ_CP169062.1"/>
</dbReference>
<dbReference type="SMR" id="C5BB22"/>
<dbReference type="STRING" id="67780.B6E78_10285"/>
<dbReference type="GeneID" id="69540568"/>
<dbReference type="KEGG" id="eic:NT01EI_3736"/>
<dbReference type="PATRIC" id="fig|634503.3.peg.3337"/>
<dbReference type="HOGENOM" id="CLU_076324_0_0_6"/>
<dbReference type="OrthoDB" id="3191794at2"/>
<dbReference type="Proteomes" id="UP000001485">
    <property type="component" value="Chromosome"/>
</dbReference>
<dbReference type="GO" id="GO:0005737">
    <property type="term" value="C:cytoplasm"/>
    <property type="evidence" value="ECO:0007669"/>
    <property type="project" value="UniProtKB-SubCell"/>
</dbReference>
<dbReference type="GO" id="GO:0008990">
    <property type="term" value="F:rRNA (guanine-N2-)-methyltransferase activity"/>
    <property type="evidence" value="ECO:0007669"/>
    <property type="project" value="UniProtKB-UniRule"/>
</dbReference>
<dbReference type="CDD" id="cd02440">
    <property type="entry name" value="AdoMet_MTases"/>
    <property type="match status" value="1"/>
</dbReference>
<dbReference type="Gene3D" id="3.40.50.150">
    <property type="entry name" value="Vaccinia Virus protein VP39"/>
    <property type="match status" value="1"/>
</dbReference>
<dbReference type="Gene3D" id="3.40.1630.10">
    <property type="entry name" value="YhiQ-like domain"/>
    <property type="match status" value="1"/>
</dbReference>
<dbReference type="HAMAP" id="MF_01523">
    <property type="entry name" value="16SrRNA_methyltr_J"/>
    <property type="match status" value="1"/>
</dbReference>
<dbReference type="InterPro" id="IPR007536">
    <property type="entry name" value="16SrRNA_methylTrfase_J"/>
</dbReference>
<dbReference type="InterPro" id="IPR029063">
    <property type="entry name" value="SAM-dependent_MTases_sf"/>
</dbReference>
<dbReference type="NCBIfam" id="NF008012">
    <property type="entry name" value="PRK10742.1"/>
    <property type="match status" value="1"/>
</dbReference>
<dbReference type="PANTHER" id="PTHR36112">
    <property type="entry name" value="RIBOSOMAL RNA SMALL SUBUNIT METHYLTRANSFERASE J"/>
    <property type="match status" value="1"/>
</dbReference>
<dbReference type="PANTHER" id="PTHR36112:SF1">
    <property type="entry name" value="RIBOSOMAL RNA SMALL SUBUNIT METHYLTRANSFERASE J"/>
    <property type="match status" value="1"/>
</dbReference>
<dbReference type="Pfam" id="PF04445">
    <property type="entry name" value="SAM_MT"/>
    <property type="match status" value="1"/>
</dbReference>
<dbReference type="SUPFAM" id="SSF53335">
    <property type="entry name" value="S-adenosyl-L-methionine-dependent methyltransferases"/>
    <property type="match status" value="1"/>
</dbReference>
<keyword id="KW-0963">Cytoplasm</keyword>
<keyword id="KW-0489">Methyltransferase</keyword>
<keyword id="KW-0698">rRNA processing</keyword>
<keyword id="KW-0949">S-adenosyl-L-methionine</keyword>
<keyword id="KW-0808">Transferase</keyword>
<comment type="function">
    <text evidence="1">Specifically methylates the guanosine in position 1516 of 16S rRNA.</text>
</comment>
<comment type="catalytic activity">
    <reaction evidence="1">
        <text>guanosine(1516) in 16S rRNA + S-adenosyl-L-methionine = N(2)-methylguanosine(1516) in 16S rRNA + S-adenosyl-L-homocysteine + H(+)</text>
        <dbReference type="Rhea" id="RHEA:43220"/>
        <dbReference type="Rhea" id="RHEA-COMP:10412"/>
        <dbReference type="Rhea" id="RHEA-COMP:10413"/>
        <dbReference type="ChEBI" id="CHEBI:15378"/>
        <dbReference type="ChEBI" id="CHEBI:57856"/>
        <dbReference type="ChEBI" id="CHEBI:59789"/>
        <dbReference type="ChEBI" id="CHEBI:74269"/>
        <dbReference type="ChEBI" id="CHEBI:74481"/>
        <dbReference type="EC" id="2.1.1.242"/>
    </reaction>
</comment>
<comment type="subcellular location">
    <subcellularLocation>
        <location evidence="1">Cytoplasm</location>
    </subcellularLocation>
</comment>
<comment type="similarity">
    <text evidence="1">Belongs to the methyltransferase superfamily. RsmJ family.</text>
</comment>
<name>RSMJ_EDWI9</name>
<organism>
    <name type="scientific">Edwardsiella ictaluri (strain 93-146)</name>
    <dbReference type="NCBI Taxonomy" id="634503"/>
    <lineage>
        <taxon>Bacteria</taxon>
        <taxon>Pseudomonadati</taxon>
        <taxon>Pseudomonadota</taxon>
        <taxon>Gammaproteobacteria</taxon>
        <taxon>Enterobacterales</taxon>
        <taxon>Hafniaceae</taxon>
        <taxon>Edwardsiella</taxon>
    </lineage>
</organism>
<reference key="1">
    <citation type="submission" date="2009-03" db="EMBL/GenBank/DDBJ databases">
        <title>Complete genome sequence of Edwardsiella ictaluri 93-146.</title>
        <authorList>
            <person name="Williams M.L."/>
            <person name="Gillaspy A.F."/>
            <person name="Dyer D.W."/>
            <person name="Thune R.L."/>
            <person name="Waldbieser G.C."/>
            <person name="Schuster S.C."/>
            <person name="Gipson J."/>
            <person name="Zaitshik J."/>
            <person name="Landry C."/>
            <person name="Lawrence M.L."/>
        </authorList>
    </citation>
    <scope>NUCLEOTIDE SEQUENCE [LARGE SCALE GENOMIC DNA]</scope>
    <source>
        <strain>93-146</strain>
    </source>
</reference>